<geneLocation type="plasmid">
    <name>pIJ101</name>
</geneLocation>
<proteinExistence type="predicted"/>
<feature type="chain" id="PRO_0000066095" description="Uncharacterized 6.0 kDa protein">
    <location>
        <begin position="1"/>
        <end position="56"/>
    </location>
</feature>
<protein>
    <recommendedName>
        <fullName>Uncharacterized 6.0 kDa protein</fullName>
    </recommendedName>
    <alternativeName>
        <fullName>ORF 56</fullName>
    </alternativeName>
</protein>
<keyword id="KW-0614">Plasmid</keyword>
<accession>P22400</accession>
<sequence length="56" mass="5954">MTDFDGRLTEGTVNLVQDPNGGGWSAHCAEPGCDWADFAGPLGFQGLVAIARRHTH</sequence>
<reference key="1">
    <citation type="journal article" date="1988" name="J. Bacteriol.">
        <title>Complete nucleotide sequence of the Streptomyces lividans plasmid pIJ101 and correlation of the sequence with genetic properties.</title>
        <authorList>
            <person name="Kendall K.J."/>
            <person name="Cohen S.N."/>
        </authorList>
    </citation>
    <scope>NUCLEOTIDE SEQUENCE [GENOMIC DNA]</scope>
</reference>
<dbReference type="EMBL" id="M21778">
    <property type="protein sequence ID" value="AAA88405.1"/>
    <property type="molecule type" value="Genomic_DNA"/>
</dbReference>
<dbReference type="PIR" id="B31844">
    <property type="entry name" value="B31844"/>
</dbReference>
<dbReference type="RefSeq" id="NP_040442.1">
    <property type="nucleotide sequence ID" value="NC_001387.1"/>
</dbReference>
<dbReference type="RefSeq" id="WP_010889914.1">
    <property type="nucleotide sequence ID" value="NC_001387.1"/>
</dbReference>
<name>Y6KD_STRLI</name>
<organism>
    <name type="scientific">Streptomyces lividans</name>
    <dbReference type="NCBI Taxonomy" id="1916"/>
    <lineage>
        <taxon>Bacteria</taxon>
        <taxon>Bacillati</taxon>
        <taxon>Actinomycetota</taxon>
        <taxon>Actinomycetes</taxon>
        <taxon>Kitasatosporales</taxon>
        <taxon>Streptomycetaceae</taxon>
        <taxon>Streptomyces</taxon>
    </lineage>
</organism>